<protein>
    <recommendedName>
        <fullName evidence="1">NADH-quinone oxidoreductase subunit D</fullName>
        <ecNumber evidence="1">7.1.1.-</ecNumber>
    </recommendedName>
    <alternativeName>
        <fullName evidence="1">NADH dehydrogenase I subunit D</fullName>
    </alternativeName>
    <alternativeName>
        <fullName evidence="1">NDH-1 subunit D</fullName>
    </alternativeName>
</protein>
<dbReference type="EC" id="7.1.1.-" evidence="1"/>
<dbReference type="EMBL" id="CP001124">
    <property type="protein sequence ID" value="ACH40915.1"/>
    <property type="molecule type" value="Genomic_DNA"/>
</dbReference>
<dbReference type="RefSeq" id="WP_012532349.1">
    <property type="nucleotide sequence ID" value="NC_011146.1"/>
</dbReference>
<dbReference type="SMR" id="B5EFG0"/>
<dbReference type="STRING" id="404380.Gbem_3923"/>
<dbReference type="KEGG" id="gbm:Gbem_3923"/>
<dbReference type="eggNOG" id="COG0649">
    <property type="taxonomic scope" value="Bacteria"/>
</dbReference>
<dbReference type="HOGENOM" id="CLU_015134_1_2_7"/>
<dbReference type="OrthoDB" id="9801496at2"/>
<dbReference type="Proteomes" id="UP000008825">
    <property type="component" value="Chromosome"/>
</dbReference>
<dbReference type="GO" id="GO:0005886">
    <property type="term" value="C:plasma membrane"/>
    <property type="evidence" value="ECO:0007669"/>
    <property type="project" value="UniProtKB-SubCell"/>
</dbReference>
<dbReference type="GO" id="GO:0051287">
    <property type="term" value="F:NAD binding"/>
    <property type="evidence" value="ECO:0007669"/>
    <property type="project" value="InterPro"/>
</dbReference>
<dbReference type="GO" id="GO:0050136">
    <property type="term" value="F:NADH:ubiquinone reductase (non-electrogenic) activity"/>
    <property type="evidence" value="ECO:0007669"/>
    <property type="project" value="UniProtKB-UniRule"/>
</dbReference>
<dbReference type="GO" id="GO:0048038">
    <property type="term" value="F:quinone binding"/>
    <property type="evidence" value="ECO:0007669"/>
    <property type="project" value="UniProtKB-KW"/>
</dbReference>
<dbReference type="FunFam" id="1.10.645.10:FF:000005">
    <property type="entry name" value="NADH-quinone oxidoreductase subunit D"/>
    <property type="match status" value="1"/>
</dbReference>
<dbReference type="Gene3D" id="1.10.645.10">
    <property type="entry name" value="Cytochrome-c3 Hydrogenase, chain B"/>
    <property type="match status" value="1"/>
</dbReference>
<dbReference type="HAMAP" id="MF_01358">
    <property type="entry name" value="NDH1_NuoD"/>
    <property type="match status" value="1"/>
</dbReference>
<dbReference type="InterPro" id="IPR001135">
    <property type="entry name" value="NADH_Q_OxRdtase_suD"/>
</dbReference>
<dbReference type="InterPro" id="IPR014029">
    <property type="entry name" value="NADH_UbQ_OxRdtase_49kDa_CS"/>
</dbReference>
<dbReference type="InterPro" id="IPR022885">
    <property type="entry name" value="NDH1_su_D/H"/>
</dbReference>
<dbReference type="InterPro" id="IPR029014">
    <property type="entry name" value="NiFe-Hase_large"/>
</dbReference>
<dbReference type="NCBIfam" id="TIGR01962">
    <property type="entry name" value="NuoD"/>
    <property type="match status" value="1"/>
</dbReference>
<dbReference type="NCBIfam" id="NF004739">
    <property type="entry name" value="PRK06075.1"/>
    <property type="match status" value="1"/>
</dbReference>
<dbReference type="PANTHER" id="PTHR11993:SF10">
    <property type="entry name" value="NADH DEHYDROGENASE [UBIQUINONE] IRON-SULFUR PROTEIN 2, MITOCHONDRIAL"/>
    <property type="match status" value="1"/>
</dbReference>
<dbReference type="PANTHER" id="PTHR11993">
    <property type="entry name" value="NADH-UBIQUINONE OXIDOREDUCTASE 49 KDA SUBUNIT"/>
    <property type="match status" value="1"/>
</dbReference>
<dbReference type="Pfam" id="PF00346">
    <property type="entry name" value="Complex1_49kDa"/>
    <property type="match status" value="1"/>
</dbReference>
<dbReference type="SUPFAM" id="SSF56762">
    <property type="entry name" value="HydB/Nqo4-like"/>
    <property type="match status" value="1"/>
</dbReference>
<dbReference type="PROSITE" id="PS00535">
    <property type="entry name" value="COMPLEX1_49K"/>
    <property type="match status" value="1"/>
</dbReference>
<evidence type="ECO:0000255" key="1">
    <source>
        <dbReference type="HAMAP-Rule" id="MF_01358"/>
    </source>
</evidence>
<feature type="chain" id="PRO_0000357821" description="NADH-quinone oxidoreductase subunit D">
    <location>
        <begin position="1"/>
        <end position="389"/>
    </location>
</feature>
<organism>
    <name type="scientific">Citrifermentans bemidjiense (strain ATCC BAA-1014 / DSM 16622 / JCM 12645 / Bem)</name>
    <name type="common">Geobacter bemidjiensis</name>
    <dbReference type="NCBI Taxonomy" id="404380"/>
    <lineage>
        <taxon>Bacteria</taxon>
        <taxon>Pseudomonadati</taxon>
        <taxon>Thermodesulfobacteriota</taxon>
        <taxon>Desulfuromonadia</taxon>
        <taxon>Geobacterales</taxon>
        <taxon>Geobacteraceae</taxon>
        <taxon>Citrifermentans</taxon>
    </lineage>
</organism>
<keyword id="KW-0997">Cell inner membrane</keyword>
<keyword id="KW-1003">Cell membrane</keyword>
<keyword id="KW-0472">Membrane</keyword>
<keyword id="KW-0520">NAD</keyword>
<keyword id="KW-0874">Quinone</keyword>
<keyword id="KW-1185">Reference proteome</keyword>
<keyword id="KW-1278">Translocase</keyword>
<keyword id="KW-0813">Transport</keyword>
<keyword id="KW-0830">Ubiquinone</keyword>
<gene>
    <name evidence="1" type="primary">nuoD</name>
    <name type="ordered locus">Gbem_3923</name>
</gene>
<reference key="1">
    <citation type="submission" date="2008-07" db="EMBL/GenBank/DDBJ databases">
        <title>Complete sequence of Geobacter bemidjiensis BEM.</title>
        <authorList>
            <consortium name="US DOE Joint Genome Institute"/>
            <person name="Lucas S."/>
            <person name="Copeland A."/>
            <person name="Lapidus A."/>
            <person name="Glavina del Rio T."/>
            <person name="Dalin E."/>
            <person name="Tice H."/>
            <person name="Bruce D."/>
            <person name="Goodwin L."/>
            <person name="Pitluck S."/>
            <person name="Kiss H."/>
            <person name="Brettin T."/>
            <person name="Detter J.C."/>
            <person name="Han C."/>
            <person name="Kuske C.R."/>
            <person name="Schmutz J."/>
            <person name="Larimer F."/>
            <person name="Land M."/>
            <person name="Hauser L."/>
            <person name="Kyrpides N."/>
            <person name="Lykidis A."/>
            <person name="Lovley D."/>
            <person name="Richardson P."/>
        </authorList>
    </citation>
    <scope>NUCLEOTIDE SEQUENCE [LARGE SCALE GENOMIC DNA]</scope>
    <source>
        <strain>ATCC BAA-1014 / DSM 16622 / JCM 12645 / Bem</strain>
    </source>
</reference>
<accession>B5EFG0</accession>
<proteinExistence type="inferred from homology"/>
<comment type="function">
    <text evidence="1">NDH-1 shuttles electrons from NADH, via FMN and iron-sulfur (Fe-S) centers, to quinones in the respiratory chain. The immediate electron acceptor for the enzyme in this species is believed to be ubiquinone. Couples the redox reaction to proton translocation (for every two electrons transferred, four hydrogen ions are translocated across the cytoplasmic membrane), and thus conserves the redox energy in a proton gradient.</text>
</comment>
<comment type="catalytic activity">
    <reaction evidence="1">
        <text>a quinone + NADH + 5 H(+)(in) = a quinol + NAD(+) + 4 H(+)(out)</text>
        <dbReference type="Rhea" id="RHEA:57888"/>
        <dbReference type="ChEBI" id="CHEBI:15378"/>
        <dbReference type="ChEBI" id="CHEBI:24646"/>
        <dbReference type="ChEBI" id="CHEBI:57540"/>
        <dbReference type="ChEBI" id="CHEBI:57945"/>
        <dbReference type="ChEBI" id="CHEBI:132124"/>
    </reaction>
</comment>
<comment type="subunit">
    <text evidence="1">NDH-1 is composed of 14 different subunits. Subunits NuoB, C, D, E, F, and G constitute the peripheral sector of the complex.</text>
</comment>
<comment type="subcellular location">
    <subcellularLocation>
        <location evidence="1">Cell inner membrane</location>
        <topology evidence="1">Peripheral membrane protein</topology>
        <orientation evidence="1">Cytoplasmic side</orientation>
    </subcellularLocation>
</comment>
<comment type="similarity">
    <text evidence="1">Belongs to the complex I 49 kDa subunit family.</text>
</comment>
<name>NUOD_CITBB</name>
<sequence length="389" mass="43533">MASEIMTLNMGPQHPSTHGVLRLVVELDGEVIQKITPHIGYLHRGIEKLSEHRTYHQALPLTDRMDYLAPMHNNLGYVLAVEKLLGIEVPERAETIRVIMAELTRLKSHLVWIACHALDIGAMTVFIYAFREREKIMELYEMVSGARMTSNYFRVGGLSRDLPAGFESAVQEILDTFPGHFDTYEGLLTKNTIWLQRTIGNGVISADDAIDFGISGPALRGSGVDFDLRRDLPYSGYEKYDFKVPVGENCDTFDRYKVRLVEMREAVKIIDQAMKRLKPGPILADAPQVCYPPKESVYNSIEGLIHHFKIASEGFPVPEGEVYQGVENPKGELGYYMVSDGGSKPYRMRVRPPSFVNLGAIEKMAKGSMIADLVAVIGTLDIVLGEIDR</sequence>